<evidence type="ECO:0000255" key="1">
    <source>
        <dbReference type="HAMAP-Rule" id="MF_00532"/>
    </source>
</evidence>
<evidence type="ECO:0000305" key="2"/>
<reference key="1">
    <citation type="journal article" date="2004" name="Proc. Natl. Acad. Sci. U.S.A.">
        <title>Insights into the evolution of Yersinia pestis through whole-genome comparison with Yersinia pseudotuberculosis.</title>
        <authorList>
            <person name="Chain P.S.G."/>
            <person name="Carniel E."/>
            <person name="Larimer F.W."/>
            <person name="Lamerdin J."/>
            <person name="Stoutland P.O."/>
            <person name="Regala W.M."/>
            <person name="Georgescu A.M."/>
            <person name="Vergez L.M."/>
            <person name="Land M.L."/>
            <person name="Motin V.L."/>
            <person name="Brubaker R.R."/>
            <person name="Fowler J."/>
            <person name="Hinnebusch J."/>
            <person name="Marceau M."/>
            <person name="Medigue C."/>
            <person name="Simonet M."/>
            <person name="Chenal-Francisque V."/>
            <person name="Souza B."/>
            <person name="Dacheux D."/>
            <person name="Elliott J.M."/>
            <person name="Derbise A."/>
            <person name="Hauser L.J."/>
            <person name="Garcia E."/>
        </authorList>
    </citation>
    <scope>NUCLEOTIDE SEQUENCE [LARGE SCALE GENOMIC DNA]</scope>
    <source>
        <strain>IP32953</strain>
    </source>
</reference>
<name>RS9_YERPS</name>
<organism>
    <name type="scientific">Yersinia pseudotuberculosis serotype I (strain IP32953)</name>
    <dbReference type="NCBI Taxonomy" id="273123"/>
    <lineage>
        <taxon>Bacteria</taxon>
        <taxon>Pseudomonadati</taxon>
        <taxon>Pseudomonadota</taxon>
        <taxon>Gammaproteobacteria</taxon>
        <taxon>Enterobacterales</taxon>
        <taxon>Yersiniaceae</taxon>
        <taxon>Yersinia</taxon>
    </lineage>
</organism>
<comment type="similarity">
    <text evidence="1">Belongs to the universal ribosomal protein uS9 family.</text>
</comment>
<proteinExistence type="inferred from homology"/>
<accession>Q665L0</accession>
<dbReference type="EMBL" id="BX936398">
    <property type="protein sequence ID" value="CAH22745.1"/>
    <property type="molecule type" value="Genomic_DNA"/>
</dbReference>
<dbReference type="RefSeq" id="WP_002210133.1">
    <property type="nucleotide sequence ID" value="NZ_CP009712.1"/>
</dbReference>
<dbReference type="SMR" id="Q665L0"/>
<dbReference type="GeneID" id="96662997"/>
<dbReference type="KEGG" id="ypo:BZ17_3095"/>
<dbReference type="KEGG" id="yps:YPTB3507"/>
<dbReference type="PATRIC" id="fig|273123.14.peg.3241"/>
<dbReference type="Proteomes" id="UP000001011">
    <property type="component" value="Chromosome"/>
</dbReference>
<dbReference type="GO" id="GO:0022627">
    <property type="term" value="C:cytosolic small ribosomal subunit"/>
    <property type="evidence" value="ECO:0007669"/>
    <property type="project" value="TreeGrafter"/>
</dbReference>
<dbReference type="GO" id="GO:0003723">
    <property type="term" value="F:RNA binding"/>
    <property type="evidence" value="ECO:0007669"/>
    <property type="project" value="TreeGrafter"/>
</dbReference>
<dbReference type="GO" id="GO:0003735">
    <property type="term" value="F:structural constituent of ribosome"/>
    <property type="evidence" value="ECO:0007669"/>
    <property type="project" value="InterPro"/>
</dbReference>
<dbReference type="GO" id="GO:0006412">
    <property type="term" value="P:translation"/>
    <property type="evidence" value="ECO:0007669"/>
    <property type="project" value="UniProtKB-UniRule"/>
</dbReference>
<dbReference type="FunFam" id="3.30.230.10:FF:000001">
    <property type="entry name" value="30S ribosomal protein S9"/>
    <property type="match status" value="1"/>
</dbReference>
<dbReference type="Gene3D" id="3.30.230.10">
    <property type="match status" value="1"/>
</dbReference>
<dbReference type="HAMAP" id="MF_00532_B">
    <property type="entry name" value="Ribosomal_uS9_B"/>
    <property type="match status" value="1"/>
</dbReference>
<dbReference type="InterPro" id="IPR020568">
    <property type="entry name" value="Ribosomal_Su5_D2-typ_SF"/>
</dbReference>
<dbReference type="InterPro" id="IPR000754">
    <property type="entry name" value="Ribosomal_uS9"/>
</dbReference>
<dbReference type="InterPro" id="IPR023035">
    <property type="entry name" value="Ribosomal_uS9_bac/plastid"/>
</dbReference>
<dbReference type="InterPro" id="IPR020574">
    <property type="entry name" value="Ribosomal_uS9_CS"/>
</dbReference>
<dbReference type="InterPro" id="IPR014721">
    <property type="entry name" value="Ribsml_uS5_D2-typ_fold_subgr"/>
</dbReference>
<dbReference type="NCBIfam" id="NF001099">
    <property type="entry name" value="PRK00132.1"/>
    <property type="match status" value="1"/>
</dbReference>
<dbReference type="PANTHER" id="PTHR21569">
    <property type="entry name" value="RIBOSOMAL PROTEIN S9"/>
    <property type="match status" value="1"/>
</dbReference>
<dbReference type="PANTHER" id="PTHR21569:SF1">
    <property type="entry name" value="SMALL RIBOSOMAL SUBUNIT PROTEIN US9M"/>
    <property type="match status" value="1"/>
</dbReference>
<dbReference type="Pfam" id="PF00380">
    <property type="entry name" value="Ribosomal_S9"/>
    <property type="match status" value="1"/>
</dbReference>
<dbReference type="SUPFAM" id="SSF54211">
    <property type="entry name" value="Ribosomal protein S5 domain 2-like"/>
    <property type="match status" value="1"/>
</dbReference>
<dbReference type="PROSITE" id="PS00360">
    <property type="entry name" value="RIBOSOMAL_S9"/>
    <property type="match status" value="1"/>
</dbReference>
<protein>
    <recommendedName>
        <fullName evidence="1">Small ribosomal subunit protein uS9</fullName>
    </recommendedName>
    <alternativeName>
        <fullName evidence="2">30S ribosomal protein S9</fullName>
    </alternativeName>
</protein>
<gene>
    <name evidence="1" type="primary">rpsI</name>
    <name type="ordered locus">YPTB3507</name>
</gene>
<sequence length="130" mass="14769">MAENQYYGTGRRKSSSARVFLKPGSGKIVINQRSLEVYFGRETARMVVNQPLELVDMVTKFDMYITVKGGGISGQAGAIRHGITRALMEYDESLRGELRKAGFVTRDAREVERKKVGLRKARRRPQFSKR</sequence>
<keyword id="KW-0687">Ribonucleoprotein</keyword>
<keyword id="KW-0689">Ribosomal protein</keyword>
<feature type="chain" id="PRO_1000051372" description="Small ribosomal subunit protein uS9">
    <location>
        <begin position="1"/>
        <end position="130"/>
    </location>
</feature>